<sequence length="100" mass="11074">MTESYVNKEEIISLAKNAALELEDAHVEEFVTSMNDVIALMQEVIAIDISDIILEATVHHFVGPEDLREDMVTSDFTQEEFLSNVPVSLGGLVKVPTVIK</sequence>
<dbReference type="EC" id="6.3.5.-"/>
<dbReference type="EMBL" id="AE001273">
    <property type="protein sequence ID" value="AAC67592.1"/>
    <property type="molecule type" value="Genomic_DNA"/>
</dbReference>
<dbReference type="PIR" id="E71568">
    <property type="entry name" value="E71568"/>
</dbReference>
<dbReference type="RefSeq" id="NP_219504.1">
    <property type="nucleotide sequence ID" value="NC_000117.1"/>
</dbReference>
<dbReference type="RefSeq" id="WP_009871348.1">
    <property type="nucleotide sequence ID" value="NC_000117.1"/>
</dbReference>
<dbReference type="SMR" id="O84005"/>
<dbReference type="STRING" id="272561.CT_002"/>
<dbReference type="EnsemblBacteria" id="AAC67592">
    <property type="protein sequence ID" value="AAC67592"/>
    <property type="gene ID" value="CT_002"/>
</dbReference>
<dbReference type="GeneID" id="884067"/>
<dbReference type="KEGG" id="ctr:CT_002"/>
<dbReference type="PATRIC" id="fig|272561.5.peg.3"/>
<dbReference type="HOGENOM" id="CLU_105899_1_2_0"/>
<dbReference type="InParanoid" id="O84005"/>
<dbReference type="OrthoDB" id="18187at2"/>
<dbReference type="Proteomes" id="UP000000431">
    <property type="component" value="Chromosome"/>
</dbReference>
<dbReference type="GO" id="GO:0050566">
    <property type="term" value="F:asparaginyl-tRNA synthase (glutamine-hydrolyzing) activity"/>
    <property type="evidence" value="ECO:0007669"/>
    <property type="project" value="RHEA"/>
</dbReference>
<dbReference type="GO" id="GO:0005524">
    <property type="term" value="F:ATP binding"/>
    <property type="evidence" value="ECO:0007669"/>
    <property type="project" value="UniProtKB-KW"/>
</dbReference>
<dbReference type="GO" id="GO:0050567">
    <property type="term" value="F:glutaminyl-tRNA synthase (glutamine-hydrolyzing) activity"/>
    <property type="evidence" value="ECO:0007669"/>
    <property type="project" value="UniProtKB-UniRule"/>
</dbReference>
<dbReference type="GO" id="GO:0006450">
    <property type="term" value="P:regulation of translational fidelity"/>
    <property type="evidence" value="ECO:0007669"/>
    <property type="project" value="InterPro"/>
</dbReference>
<dbReference type="GO" id="GO:0006412">
    <property type="term" value="P:translation"/>
    <property type="evidence" value="ECO:0007669"/>
    <property type="project" value="UniProtKB-UniRule"/>
</dbReference>
<dbReference type="HAMAP" id="MF_00122">
    <property type="entry name" value="GatC"/>
    <property type="match status" value="1"/>
</dbReference>
<dbReference type="InterPro" id="IPR036113">
    <property type="entry name" value="Asp/Glu-ADT_sf_sub_c"/>
</dbReference>
<dbReference type="InterPro" id="IPR003837">
    <property type="entry name" value="GatC"/>
</dbReference>
<dbReference type="NCBIfam" id="TIGR00135">
    <property type="entry name" value="gatC"/>
    <property type="match status" value="1"/>
</dbReference>
<dbReference type="Pfam" id="PF02686">
    <property type="entry name" value="GatC"/>
    <property type="match status" value="1"/>
</dbReference>
<dbReference type="SUPFAM" id="SSF141000">
    <property type="entry name" value="Glu-tRNAGln amidotransferase C subunit"/>
    <property type="match status" value="1"/>
</dbReference>
<comment type="function">
    <text evidence="1">Allows the formation of correctly charged Asn-tRNA(Asn) or Gln-tRNA(Gln) through the transamidation of misacylated Asp-tRNA(Asn) or Glu-tRNA(Gln) in organisms which lack either or both of asparaginyl-tRNA or glutaminyl-tRNA synthetases. The reaction takes place in the presence of glutamine and ATP through an activated phospho-Asp-tRNA(Asn) or phospho-Glu-tRNA(Gln) (By similarity).</text>
</comment>
<comment type="catalytic activity">
    <reaction>
        <text>L-glutamyl-tRNA(Gln) + L-glutamine + ATP + H2O = L-glutaminyl-tRNA(Gln) + L-glutamate + ADP + phosphate + H(+)</text>
        <dbReference type="Rhea" id="RHEA:17521"/>
        <dbReference type="Rhea" id="RHEA-COMP:9681"/>
        <dbReference type="Rhea" id="RHEA-COMP:9684"/>
        <dbReference type="ChEBI" id="CHEBI:15377"/>
        <dbReference type="ChEBI" id="CHEBI:15378"/>
        <dbReference type="ChEBI" id="CHEBI:29985"/>
        <dbReference type="ChEBI" id="CHEBI:30616"/>
        <dbReference type="ChEBI" id="CHEBI:43474"/>
        <dbReference type="ChEBI" id="CHEBI:58359"/>
        <dbReference type="ChEBI" id="CHEBI:78520"/>
        <dbReference type="ChEBI" id="CHEBI:78521"/>
        <dbReference type="ChEBI" id="CHEBI:456216"/>
    </reaction>
</comment>
<comment type="catalytic activity">
    <reaction>
        <text>L-aspartyl-tRNA(Asn) + L-glutamine + ATP + H2O = L-asparaginyl-tRNA(Asn) + L-glutamate + ADP + phosphate + 2 H(+)</text>
        <dbReference type="Rhea" id="RHEA:14513"/>
        <dbReference type="Rhea" id="RHEA-COMP:9674"/>
        <dbReference type="Rhea" id="RHEA-COMP:9677"/>
        <dbReference type="ChEBI" id="CHEBI:15377"/>
        <dbReference type="ChEBI" id="CHEBI:15378"/>
        <dbReference type="ChEBI" id="CHEBI:29985"/>
        <dbReference type="ChEBI" id="CHEBI:30616"/>
        <dbReference type="ChEBI" id="CHEBI:43474"/>
        <dbReference type="ChEBI" id="CHEBI:58359"/>
        <dbReference type="ChEBI" id="CHEBI:78515"/>
        <dbReference type="ChEBI" id="CHEBI:78516"/>
        <dbReference type="ChEBI" id="CHEBI:456216"/>
    </reaction>
</comment>
<comment type="subunit">
    <text evidence="1">Heterotrimer of A, B and C subunits.</text>
</comment>
<comment type="similarity">
    <text evidence="2">Belongs to the GatC family.</text>
</comment>
<keyword id="KW-0067">ATP-binding</keyword>
<keyword id="KW-0436">Ligase</keyword>
<keyword id="KW-0547">Nucleotide-binding</keyword>
<keyword id="KW-0648">Protein biosynthesis</keyword>
<keyword id="KW-1185">Reference proteome</keyword>
<evidence type="ECO:0000250" key="1"/>
<evidence type="ECO:0000305" key="2"/>
<reference key="1">
    <citation type="journal article" date="1998" name="Science">
        <title>Genome sequence of an obligate intracellular pathogen of humans: Chlamydia trachomatis.</title>
        <authorList>
            <person name="Stephens R.S."/>
            <person name="Kalman S."/>
            <person name="Lammel C.J."/>
            <person name="Fan J."/>
            <person name="Marathe R."/>
            <person name="Aravind L."/>
            <person name="Mitchell W.P."/>
            <person name="Olinger L."/>
            <person name="Tatusov R.L."/>
            <person name="Zhao Q."/>
            <person name="Koonin E.V."/>
            <person name="Davis R.W."/>
        </authorList>
    </citation>
    <scope>NUCLEOTIDE SEQUENCE [LARGE SCALE GENOMIC DNA]</scope>
    <source>
        <strain>ATCC VR-885 / DSM 19411 / UW-3/Cx</strain>
    </source>
</reference>
<gene>
    <name type="primary">gatC</name>
    <name type="ordered locus">CT_002</name>
</gene>
<proteinExistence type="inferred from homology"/>
<accession>O84005</accession>
<name>GATC_CHLTR</name>
<protein>
    <recommendedName>
        <fullName>Glutamyl-tRNA(Gln) amidotransferase subunit C</fullName>
        <shortName>Glu-ADT subunit C</shortName>
        <ecNumber>6.3.5.-</ecNumber>
    </recommendedName>
</protein>
<organism>
    <name type="scientific">Chlamydia trachomatis serovar D (strain ATCC VR-885 / DSM 19411 / UW-3/Cx)</name>
    <dbReference type="NCBI Taxonomy" id="272561"/>
    <lineage>
        <taxon>Bacteria</taxon>
        <taxon>Pseudomonadati</taxon>
        <taxon>Chlamydiota</taxon>
        <taxon>Chlamydiia</taxon>
        <taxon>Chlamydiales</taxon>
        <taxon>Chlamydiaceae</taxon>
        <taxon>Chlamydia/Chlamydophila group</taxon>
        <taxon>Chlamydia</taxon>
    </lineage>
</organism>
<feature type="chain" id="PRO_0000105291" description="Glutamyl-tRNA(Gln) amidotransferase subunit C">
    <location>
        <begin position="1"/>
        <end position="100"/>
    </location>
</feature>